<reference key="1">
    <citation type="journal article" date="2011" name="PLoS Genet.">
        <title>Comparative genomic analysis of human fungal pathogens causing paracoccidioidomycosis.</title>
        <authorList>
            <person name="Desjardins C.A."/>
            <person name="Champion M.D."/>
            <person name="Holder J.W."/>
            <person name="Muszewska A."/>
            <person name="Goldberg J."/>
            <person name="Bailao A.M."/>
            <person name="Brigido M.M."/>
            <person name="Ferreira M.E."/>
            <person name="Garcia A.M."/>
            <person name="Grynberg M."/>
            <person name="Gujja S."/>
            <person name="Heiman D.I."/>
            <person name="Henn M.R."/>
            <person name="Kodira C.D."/>
            <person name="Leon-Narvaez H."/>
            <person name="Longo L.V.G."/>
            <person name="Ma L.-J."/>
            <person name="Malavazi I."/>
            <person name="Matsuo A.L."/>
            <person name="Morais F.V."/>
            <person name="Pereira M."/>
            <person name="Rodriguez-Brito S."/>
            <person name="Sakthikumar S."/>
            <person name="Salem-Izacc S.M."/>
            <person name="Sykes S.M."/>
            <person name="Teixeira M.M."/>
            <person name="Vallejo M.C."/>
            <person name="Walter M.E."/>
            <person name="Yandava C."/>
            <person name="Young S."/>
            <person name="Zeng Q."/>
            <person name="Zucker J."/>
            <person name="Felipe M.S."/>
            <person name="Goldman G.H."/>
            <person name="Haas B.J."/>
            <person name="McEwen J.G."/>
            <person name="Nino-Vega G."/>
            <person name="Puccia R."/>
            <person name="San-Blas G."/>
            <person name="Soares C.M."/>
            <person name="Birren B.W."/>
            <person name="Cuomo C.A."/>
        </authorList>
    </citation>
    <scope>NUCLEOTIDE SEQUENCE [LARGE SCALE GENOMIC DNA]</scope>
    <source>
        <strain>Pb18</strain>
    </source>
</reference>
<protein>
    <recommendedName>
        <fullName evidence="1">Ubiquinone biosynthesis protein COQ4, mitochondrial</fullName>
    </recommendedName>
    <alternativeName>
        <fullName>4-hydroxy-3-methoxy-5-polyprenylbenzoate decarboxylase</fullName>
        <ecNumber evidence="1">4.1.1.130</ecNumber>
    </alternativeName>
    <alternativeName>
        <fullName evidence="1">Coenzyme Q biosynthesis protein 4</fullName>
    </alternativeName>
</protein>
<organism>
    <name type="scientific">Paracoccidioides brasiliensis (strain Pb18)</name>
    <dbReference type="NCBI Taxonomy" id="502780"/>
    <lineage>
        <taxon>Eukaryota</taxon>
        <taxon>Fungi</taxon>
        <taxon>Dikarya</taxon>
        <taxon>Ascomycota</taxon>
        <taxon>Pezizomycotina</taxon>
        <taxon>Eurotiomycetes</taxon>
        <taxon>Eurotiomycetidae</taxon>
        <taxon>Onygenales</taxon>
        <taxon>Ajellomycetaceae</taxon>
        <taxon>Paracoccidioides</taxon>
    </lineage>
</organism>
<evidence type="ECO:0000255" key="1">
    <source>
        <dbReference type="HAMAP-Rule" id="MF_03111"/>
    </source>
</evidence>
<proteinExistence type="inferred from homology"/>
<sequence>MPPTVRQGIRTVGTLRVTRPSSYVLSSREFSVLNRPPPNYPGHIPLTTIERGALAVGSAIGSLLNPRRADLIAALGEATATPYFIYRLRDAMLSNPTGRRILRDRPRISSKTLSVEYLRSLPPNSVGRTYVNWLDREGVGPDSRETVRYIDDEECAYVMQRYRECHDFYHAVTGLPIVVEGEVALKTFEFANTLLPMTGLSMFAVMRLKPEERERYWELHLPWAVRSGLASKEVINVYWEEELERDVNELREKLGIEKPPDLREIRKMMRRQKKAAEAAREKYQN</sequence>
<gene>
    <name evidence="1" type="primary">COQ4</name>
    <name type="ORF">PADG_06088</name>
</gene>
<feature type="transit peptide" description="Mitochondrion" evidence="1">
    <location>
        <begin position="1"/>
        <end position="11"/>
    </location>
</feature>
<feature type="chain" id="PRO_0000388125" description="Ubiquinone biosynthesis protein COQ4, mitochondrial">
    <location>
        <begin position="12"/>
        <end position="285"/>
    </location>
</feature>
<feature type="binding site" evidence="1">
    <location>
        <position position="166"/>
    </location>
    <ligand>
        <name>Zn(2+)</name>
        <dbReference type="ChEBI" id="CHEBI:29105"/>
    </ligand>
</feature>
<feature type="binding site" evidence="1">
    <location>
        <position position="167"/>
    </location>
    <ligand>
        <name>Zn(2+)</name>
        <dbReference type="ChEBI" id="CHEBI:29105"/>
    </ligand>
</feature>
<feature type="binding site" evidence="1">
    <location>
        <position position="170"/>
    </location>
    <ligand>
        <name>Zn(2+)</name>
        <dbReference type="ChEBI" id="CHEBI:29105"/>
    </ligand>
</feature>
<feature type="binding site" evidence="1">
    <location>
        <position position="182"/>
    </location>
    <ligand>
        <name>Zn(2+)</name>
        <dbReference type="ChEBI" id="CHEBI:29105"/>
    </ligand>
</feature>
<keyword id="KW-0456">Lyase</keyword>
<keyword id="KW-0472">Membrane</keyword>
<keyword id="KW-0479">Metal-binding</keyword>
<keyword id="KW-0496">Mitochondrion</keyword>
<keyword id="KW-0999">Mitochondrion inner membrane</keyword>
<keyword id="KW-1185">Reference proteome</keyword>
<keyword id="KW-0809">Transit peptide</keyword>
<keyword id="KW-0831">Ubiquinone biosynthesis</keyword>
<keyword id="KW-0862">Zinc</keyword>
<name>COQ4_PARBD</name>
<dbReference type="EC" id="4.1.1.130" evidence="1"/>
<dbReference type="EMBL" id="KN275963">
    <property type="protein sequence ID" value="EEH50009.1"/>
    <property type="molecule type" value="Genomic_DNA"/>
</dbReference>
<dbReference type="RefSeq" id="XP_010761530.1">
    <property type="nucleotide sequence ID" value="XM_010763228.1"/>
</dbReference>
<dbReference type="SMR" id="C1GFQ2"/>
<dbReference type="FunCoup" id="C1GFQ2">
    <property type="interactions" value="490"/>
</dbReference>
<dbReference type="STRING" id="502780.C1GFQ2"/>
<dbReference type="GeneID" id="22584890"/>
<dbReference type="KEGG" id="pbn:PADG_06088"/>
<dbReference type="VEuPathDB" id="FungiDB:PADG_06088"/>
<dbReference type="eggNOG" id="KOG3244">
    <property type="taxonomic scope" value="Eukaryota"/>
</dbReference>
<dbReference type="HOGENOM" id="CLU_061241_0_0_1"/>
<dbReference type="InParanoid" id="C1GFQ2"/>
<dbReference type="OMA" id="YYERHFH"/>
<dbReference type="OrthoDB" id="36451at33183"/>
<dbReference type="UniPathway" id="UPA00232"/>
<dbReference type="Proteomes" id="UP000001628">
    <property type="component" value="Unassembled WGS sequence"/>
</dbReference>
<dbReference type="GO" id="GO:0031314">
    <property type="term" value="C:extrinsic component of mitochondrial inner membrane"/>
    <property type="evidence" value="ECO:0007669"/>
    <property type="project" value="UniProtKB-UniRule"/>
</dbReference>
<dbReference type="GO" id="GO:0006744">
    <property type="term" value="P:ubiquinone biosynthetic process"/>
    <property type="evidence" value="ECO:0007669"/>
    <property type="project" value="UniProtKB-UniRule"/>
</dbReference>
<dbReference type="HAMAP" id="MF_03111">
    <property type="entry name" value="Coq4"/>
    <property type="match status" value="1"/>
</dbReference>
<dbReference type="InterPro" id="IPR007715">
    <property type="entry name" value="Coq4"/>
</dbReference>
<dbReference type="InterPro" id="IPR027540">
    <property type="entry name" value="Coq4_euk"/>
</dbReference>
<dbReference type="PANTHER" id="PTHR12922">
    <property type="entry name" value="UBIQUINONE BIOSYNTHESIS PROTEIN"/>
    <property type="match status" value="1"/>
</dbReference>
<dbReference type="PANTHER" id="PTHR12922:SF7">
    <property type="entry name" value="UBIQUINONE BIOSYNTHESIS PROTEIN COQ4 HOMOLOG, MITOCHONDRIAL"/>
    <property type="match status" value="1"/>
</dbReference>
<dbReference type="Pfam" id="PF05019">
    <property type="entry name" value="Coq4"/>
    <property type="match status" value="1"/>
</dbReference>
<accession>C1GFQ2</accession>
<comment type="function">
    <text evidence="1">Lyase that catalyzes the C1-decarboxylation of 4-hydroxy-3-methoxy-5-(all-trans-polyprenyl)benzoic acid into 2-methoxy-6-(all-trans-polyprenyl)phenol during ubiquinone biosynthesis.</text>
</comment>
<comment type="catalytic activity">
    <reaction evidence="1">
        <text>a 4-hydroxy-3-methoxy-5-(all-trans-polyprenyl)benzoate + H(+) = a 2-methoxy-6-(all-trans-polyprenyl)phenol + CO2</text>
        <dbReference type="Rhea" id="RHEA:81179"/>
        <dbReference type="Rhea" id="RHEA-COMP:9551"/>
        <dbReference type="Rhea" id="RHEA-COMP:10931"/>
        <dbReference type="ChEBI" id="CHEBI:15378"/>
        <dbReference type="ChEBI" id="CHEBI:16526"/>
        <dbReference type="ChEBI" id="CHEBI:62731"/>
        <dbReference type="ChEBI" id="CHEBI:84443"/>
        <dbReference type="EC" id="4.1.1.130"/>
    </reaction>
</comment>
<comment type="cofactor">
    <cofactor evidence="1">
        <name>Zn(2+)</name>
        <dbReference type="ChEBI" id="CHEBI:29105"/>
    </cofactor>
</comment>
<comment type="pathway">
    <text evidence="1">Cofactor biosynthesis; ubiquinone biosynthesis.</text>
</comment>
<comment type="subunit">
    <text evidence="1">Component of a multi-subunit COQ enzyme complex, composed of at least COQ3, COQ4, COQ5, COQ6, COQ7 and COQ9.</text>
</comment>
<comment type="subcellular location">
    <subcellularLocation>
        <location evidence="1">Mitochondrion inner membrane</location>
        <topology evidence="1">Peripheral membrane protein</topology>
        <orientation evidence="1">Matrix side</orientation>
    </subcellularLocation>
</comment>
<comment type="similarity">
    <text evidence="1">Belongs to the COQ4 family.</text>
</comment>